<sequence length="458" mass="50331">MALWGGRFTQAADSRFKSFNDSLRFDYRLAEQDIVGSIAWSKALVSVNVLSVQEQQQLEQALNHLLQSVQQDPEQILASDAEDIHSWVEQKLIEQVGDLGKKLHTGRSRNDQVATDLKLWCRDQGVHLLLALKTLQQQLVAVAAEHQSTVLPGYTHLQRAQPVTFTHWCLAYLEMFERDESRLTDALARLNTSPLGSGALAGTAYAIDREVLAADLGFTRATRNSLDAVSDRDHVMELMSVASISMLHLSRLAEDMIFYTTGEAGFIELADTVTSGSSLMPQKKNPDALELIRGKTGRVYGALAGMMMTVKALPLAYNKDMQEDKEGLFDALDTWFDCLQMAGLCFDGIKVNAARTLEAAKQGYSNATELADYLVAKGIPFREAHHIVGVAVVAAIGKGVALEELCLAELQQFSPLIEQDVYPILTIESCLEKRCALGGVSPKQVAHALQQAQARVKS</sequence>
<dbReference type="EC" id="4.3.2.1" evidence="1"/>
<dbReference type="EMBL" id="CP000627">
    <property type="protein sequence ID" value="ABQ19766.1"/>
    <property type="molecule type" value="Genomic_DNA"/>
</dbReference>
<dbReference type="EMBL" id="CP001235">
    <property type="protein sequence ID" value="ACP10739.1"/>
    <property type="molecule type" value="Genomic_DNA"/>
</dbReference>
<dbReference type="RefSeq" id="WP_001240133.1">
    <property type="nucleotide sequence ID" value="NZ_JAACZH010000007.1"/>
</dbReference>
<dbReference type="SMR" id="A5F4Z3"/>
<dbReference type="KEGG" id="vco:VC0395_A2217"/>
<dbReference type="KEGG" id="vcr:VC395_2754"/>
<dbReference type="PATRIC" id="fig|345073.21.peg.2653"/>
<dbReference type="eggNOG" id="COG0165">
    <property type="taxonomic scope" value="Bacteria"/>
</dbReference>
<dbReference type="HOGENOM" id="CLU_027272_2_3_6"/>
<dbReference type="OrthoDB" id="9769623at2"/>
<dbReference type="UniPathway" id="UPA00068">
    <property type="reaction ID" value="UER00114"/>
</dbReference>
<dbReference type="Proteomes" id="UP000000249">
    <property type="component" value="Chromosome 2"/>
</dbReference>
<dbReference type="GO" id="GO:0005829">
    <property type="term" value="C:cytosol"/>
    <property type="evidence" value="ECO:0007669"/>
    <property type="project" value="TreeGrafter"/>
</dbReference>
<dbReference type="GO" id="GO:0004056">
    <property type="term" value="F:argininosuccinate lyase activity"/>
    <property type="evidence" value="ECO:0007669"/>
    <property type="project" value="UniProtKB-UniRule"/>
</dbReference>
<dbReference type="GO" id="GO:0042450">
    <property type="term" value="P:arginine biosynthetic process via ornithine"/>
    <property type="evidence" value="ECO:0007669"/>
    <property type="project" value="InterPro"/>
</dbReference>
<dbReference type="GO" id="GO:0006526">
    <property type="term" value="P:L-arginine biosynthetic process"/>
    <property type="evidence" value="ECO:0007669"/>
    <property type="project" value="UniProtKB-UniRule"/>
</dbReference>
<dbReference type="CDD" id="cd01359">
    <property type="entry name" value="Argininosuccinate_lyase"/>
    <property type="match status" value="1"/>
</dbReference>
<dbReference type="FunFam" id="1.10.40.30:FF:000001">
    <property type="entry name" value="Argininosuccinate lyase"/>
    <property type="match status" value="1"/>
</dbReference>
<dbReference type="FunFam" id="1.20.200.10:FF:000006">
    <property type="entry name" value="Argininosuccinate lyase"/>
    <property type="match status" value="1"/>
</dbReference>
<dbReference type="Gene3D" id="1.10.40.30">
    <property type="entry name" value="Fumarase/aspartase (C-terminal domain)"/>
    <property type="match status" value="1"/>
</dbReference>
<dbReference type="Gene3D" id="1.20.200.10">
    <property type="entry name" value="Fumarase/aspartase (Central domain)"/>
    <property type="match status" value="1"/>
</dbReference>
<dbReference type="Gene3D" id="1.10.275.10">
    <property type="entry name" value="Fumarase/aspartase (N-terminal domain)"/>
    <property type="match status" value="1"/>
</dbReference>
<dbReference type="HAMAP" id="MF_00006">
    <property type="entry name" value="Arg_succ_lyase"/>
    <property type="match status" value="1"/>
</dbReference>
<dbReference type="InterPro" id="IPR029419">
    <property type="entry name" value="Arg_succ_lyase_C"/>
</dbReference>
<dbReference type="InterPro" id="IPR009049">
    <property type="entry name" value="Argininosuccinate_lyase"/>
</dbReference>
<dbReference type="InterPro" id="IPR024083">
    <property type="entry name" value="Fumarase/histidase_N"/>
</dbReference>
<dbReference type="InterPro" id="IPR020557">
    <property type="entry name" value="Fumarate_lyase_CS"/>
</dbReference>
<dbReference type="InterPro" id="IPR000362">
    <property type="entry name" value="Fumarate_lyase_fam"/>
</dbReference>
<dbReference type="InterPro" id="IPR022761">
    <property type="entry name" value="Fumarate_lyase_N"/>
</dbReference>
<dbReference type="InterPro" id="IPR008948">
    <property type="entry name" value="L-Aspartase-like"/>
</dbReference>
<dbReference type="NCBIfam" id="TIGR00838">
    <property type="entry name" value="argH"/>
    <property type="match status" value="1"/>
</dbReference>
<dbReference type="NCBIfam" id="NF008964">
    <property type="entry name" value="PRK12308.1"/>
    <property type="match status" value="1"/>
</dbReference>
<dbReference type="PANTHER" id="PTHR43814">
    <property type="entry name" value="ARGININOSUCCINATE LYASE"/>
    <property type="match status" value="1"/>
</dbReference>
<dbReference type="PANTHER" id="PTHR43814:SF1">
    <property type="entry name" value="ARGININOSUCCINATE LYASE"/>
    <property type="match status" value="1"/>
</dbReference>
<dbReference type="Pfam" id="PF14698">
    <property type="entry name" value="ASL_C2"/>
    <property type="match status" value="1"/>
</dbReference>
<dbReference type="Pfam" id="PF00206">
    <property type="entry name" value="Lyase_1"/>
    <property type="match status" value="1"/>
</dbReference>
<dbReference type="PRINTS" id="PR00145">
    <property type="entry name" value="ARGSUCLYASE"/>
</dbReference>
<dbReference type="PRINTS" id="PR00149">
    <property type="entry name" value="FUMRATELYASE"/>
</dbReference>
<dbReference type="SUPFAM" id="SSF48557">
    <property type="entry name" value="L-aspartase-like"/>
    <property type="match status" value="1"/>
</dbReference>
<dbReference type="PROSITE" id="PS00163">
    <property type="entry name" value="FUMARATE_LYASES"/>
    <property type="match status" value="1"/>
</dbReference>
<name>ARLY_VIBC3</name>
<proteinExistence type="inferred from homology"/>
<gene>
    <name evidence="1" type="primary">argH</name>
    <name type="ordered locus">VC0395_A2217</name>
    <name type="ordered locus">VC395_2754</name>
</gene>
<reference key="1">
    <citation type="submission" date="2007-03" db="EMBL/GenBank/DDBJ databases">
        <authorList>
            <person name="Heidelberg J."/>
        </authorList>
    </citation>
    <scope>NUCLEOTIDE SEQUENCE [LARGE SCALE GENOMIC DNA]</scope>
    <source>
        <strain>ATCC 39541 / Classical Ogawa 395 / O395</strain>
    </source>
</reference>
<reference key="2">
    <citation type="journal article" date="2008" name="PLoS ONE">
        <title>A recalibrated molecular clock and independent origins for the cholera pandemic clones.</title>
        <authorList>
            <person name="Feng L."/>
            <person name="Reeves P.R."/>
            <person name="Lan R."/>
            <person name="Ren Y."/>
            <person name="Gao C."/>
            <person name="Zhou Z."/>
            <person name="Ren Y."/>
            <person name="Cheng J."/>
            <person name="Wang W."/>
            <person name="Wang J."/>
            <person name="Qian W."/>
            <person name="Li D."/>
            <person name="Wang L."/>
        </authorList>
    </citation>
    <scope>NUCLEOTIDE SEQUENCE [LARGE SCALE GENOMIC DNA]</scope>
    <source>
        <strain>ATCC 39541 / Classical Ogawa 395 / O395</strain>
    </source>
</reference>
<keyword id="KW-0028">Amino-acid biosynthesis</keyword>
<keyword id="KW-0055">Arginine biosynthesis</keyword>
<keyword id="KW-0963">Cytoplasm</keyword>
<keyword id="KW-0456">Lyase</keyword>
<comment type="catalytic activity">
    <reaction evidence="1">
        <text>2-(N(omega)-L-arginino)succinate = fumarate + L-arginine</text>
        <dbReference type="Rhea" id="RHEA:24020"/>
        <dbReference type="ChEBI" id="CHEBI:29806"/>
        <dbReference type="ChEBI" id="CHEBI:32682"/>
        <dbReference type="ChEBI" id="CHEBI:57472"/>
        <dbReference type="EC" id="4.3.2.1"/>
    </reaction>
</comment>
<comment type="pathway">
    <text evidence="1">Amino-acid biosynthesis; L-arginine biosynthesis; L-arginine from L-ornithine and carbamoyl phosphate: step 3/3.</text>
</comment>
<comment type="subcellular location">
    <subcellularLocation>
        <location evidence="1">Cytoplasm</location>
    </subcellularLocation>
</comment>
<comment type="similarity">
    <text evidence="1">Belongs to the lyase 1 family. Argininosuccinate lyase subfamily.</text>
</comment>
<organism>
    <name type="scientific">Vibrio cholerae serotype O1 (strain ATCC 39541 / Classical Ogawa 395 / O395)</name>
    <dbReference type="NCBI Taxonomy" id="345073"/>
    <lineage>
        <taxon>Bacteria</taxon>
        <taxon>Pseudomonadati</taxon>
        <taxon>Pseudomonadota</taxon>
        <taxon>Gammaproteobacteria</taxon>
        <taxon>Vibrionales</taxon>
        <taxon>Vibrionaceae</taxon>
        <taxon>Vibrio</taxon>
    </lineage>
</organism>
<evidence type="ECO:0000255" key="1">
    <source>
        <dbReference type="HAMAP-Rule" id="MF_00006"/>
    </source>
</evidence>
<protein>
    <recommendedName>
        <fullName evidence="1">Argininosuccinate lyase</fullName>
        <shortName evidence="1">ASAL</shortName>
        <ecNumber evidence="1">4.3.2.1</ecNumber>
    </recommendedName>
    <alternativeName>
        <fullName evidence="1">Arginosuccinase</fullName>
    </alternativeName>
</protein>
<feature type="chain" id="PRO_1000070923" description="Argininosuccinate lyase">
    <location>
        <begin position="1"/>
        <end position="458"/>
    </location>
</feature>
<accession>A5F4Z3</accession>
<accession>C3LXN9</accession>